<accession>Q9Z7Y0</accession>
<accession>Q9JQI2</accession>
<gene>
    <name type="ordered locus">CPn_0573</name>
    <name type="ordered locus">CP_0176</name>
    <name type="ordered locus">CPj0573</name>
    <name type="ordered locus">CpB0595</name>
</gene>
<dbReference type="EMBL" id="AE001363">
    <property type="protein sequence ID" value="AAD18713.1"/>
    <property type="molecule type" value="Genomic_DNA"/>
</dbReference>
<dbReference type="EMBL" id="AE002161">
    <property type="protein sequence ID" value="AAF38050.1"/>
    <property type="molecule type" value="Genomic_DNA"/>
</dbReference>
<dbReference type="EMBL" id="BA000008">
    <property type="protein sequence ID" value="BAA98779.1"/>
    <property type="molecule type" value="Genomic_DNA"/>
</dbReference>
<dbReference type="EMBL" id="AE009440">
    <property type="protein sequence ID" value="AAP98524.1"/>
    <property type="molecule type" value="Genomic_DNA"/>
</dbReference>
<dbReference type="PIR" id="A86562">
    <property type="entry name" value="A86562"/>
</dbReference>
<dbReference type="PIR" id="C72061">
    <property type="entry name" value="C72061"/>
</dbReference>
<dbReference type="RefSeq" id="NP_224769.1">
    <property type="nucleotide sequence ID" value="NC_000922.1"/>
</dbReference>
<dbReference type="RefSeq" id="WP_010883211.1">
    <property type="nucleotide sequence ID" value="NZ_LN847257.1"/>
</dbReference>
<dbReference type="SMR" id="Q9Z7Y0"/>
<dbReference type="STRING" id="406984.CPK_ORF01090"/>
<dbReference type="GeneID" id="45050617"/>
<dbReference type="KEGG" id="cpa:CP_0176"/>
<dbReference type="KEGG" id="cpj:yebC"/>
<dbReference type="KEGG" id="cpn:CPn_0573"/>
<dbReference type="KEGG" id="cpt:CpB0595"/>
<dbReference type="PATRIC" id="fig|115713.3.peg.638"/>
<dbReference type="eggNOG" id="COG0217">
    <property type="taxonomic scope" value="Bacteria"/>
</dbReference>
<dbReference type="HOGENOM" id="CLU_062974_3_0_0"/>
<dbReference type="OrthoDB" id="9781053at2"/>
<dbReference type="Proteomes" id="UP000000583">
    <property type="component" value="Chromosome"/>
</dbReference>
<dbReference type="Proteomes" id="UP000000801">
    <property type="component" value="Chromosome"/>
</dbReference>
<dbReference type="GO" id="GO:0005829">
    <property type="term" value="C:cytosol"/>
    <property type="evidence" value="ECO:0007669"/>
    <property type="project" value="TreeGrafter"/>
</dbReference>
<dbReference type="GO" id="GO:0003677">
    <property type="term" value="F:DNA binding"/>
    <property type="evidence" value="ECO:0007669"/>
    <property type="project" value="UniProtKB-UniRule"/>
</dbReference>
<dbReference type="GO" id="GO:0006355">
    <property type="term" value="P:regulation of DNA-templated transcription"/>
    <property type="evidence" value="ECO:0007669"/>
    <property type="project" value="UniProtKB-UniRule"/>
</dbReference>
<dbReference type="FunFam" id="1.10.10.200:FF:000002">
    <property type="entry name" value="Probable transcriptional regulatory protein CLM62_37755"/>
    <property type="match status" value="1"/>
</dbReference>
<dbReference type="Gene3D" id="1.10.10.200">
    <property type="match status" value="1"/>
</dbReference>
<dbReference type="Gene3D" id="3.30.70.980">
    <property type="match status" value="2"/>
</dbReference>
<dbReference type="HAMAP" id="MF_00693">
    <property type="entry name" value="Transcrip_reg_TACO1"/>
    <property type="match status" value="1"/>
</dbReference>
<dbReference type="InterPro" id="IPR017856">
    <property type="entry name" value="Integrase-like_N"/>
</dbReference>
<dbReference type="InterPro" id="IPR048300">
    <property type="entry name" value="TACO1_YebC-like_2nd/3rd_dom"/>
</dbReference>
<dbReference type="InterPro" id="IPR049083">
    <property type="entry name" value="TACO1_YebC_N"/>
</dbReference>
<dbReference type="InterPro" id="IPR002876">
    <property type="entry name" value="Transcrip_reg_TACO1-like"/>
</dbReference>
<dbReference type="InterPro" id="IPR026564">
    <property type="entry name" value="Transcrip_reg_TACO1-like_dom3"/>
</dbReference>
<dbReference type="InterPro" id="IPR029072">
    <property type="entry name" value="YebC-like"/>
</dbReference>
<dbReference type="NCBIfam" id="NF001030">
    <property type="entry name" value="PRK00110.1"/>
    <property type="match status" value="1"/>
</dbReference>
<dbReference type="NCBIfam" id="NF009044">
    <property type="entry name" value="PRK12378.1"/>
    <property type="match status" value="1"/>
</dbReference>
<dbReference type="NCBIfam" id="TIGR01033">
    <property type="entry name" value="YebC/PmpR family DNA-binding transcriptional regulator"/>
    <property type="match status" value="1"/>
</dbReference>
<dbReference type="PANTHER" id="PTHR12532:SF6">
    <property type="entry name" value="TRANSCRIPTIONAL REGULATORY PROTEIN YEBC-RELATED"/>
    <property type="match status" value="1"/>
</dbReference>
<dbReference type="PANTHER" id="PTHR12532">
    <property type="entry name" value="TRANSLATIONAL ACTIVATOR OF CYTOCHROME C OXIDASE 1"/>
    <property type="match status" value="1"/>
</dbReference>
<dbReference type="Pfam" id="PF20772">
    <property type="entry name" value="TACO1_YebC_N"/>
    <property type="match status" value="1"/>
</dbReference>
<dbReference type="Pfam" id="PF01709">
    <property type="entry name" value="Transcrip_reg"/>
    <property type="match status" value="1"/>
</dbReference>
<dbReference type="SUPFAM" id="SSF75625">
    <property type="entry name" value="YebC-like"/>
    <property type="match status" value="1"/>
</dbReference>
<organism>
    <name type="scientific">Chlamydia pneumoniae</name>
    <name type="common">Chlamydophila pneumoniae</name>
    <dbReference type="NCBI Taxonomy" id="83558"/>
    <lineage>
        <taxon>Bacteria</taxon>
        <taxon>Pseudomonadati</taxon>
        <taxon>Chlamydiota</taxon>
        <taxon>Chlamydiia</taxon>
        <taxon>Chlamydiales</taxon>
        <taxon>Chlamydiaceae</taxon>
        <taxon>Chlamydia/Chlamydophila group</taxon>
        <taxon>Chlamydia</taxon>
    </lineage>
</organism>
<comment type="subcellular location">
    <subcellularLocation>
        <location evidence="1">Cytoplasm</location>
    </subcellularLocation>
</comment>
<comment type="similarity">
    <text evidence="1">Belongs to the TACO1 family.</text>
</comment>
<keyword id="KW-0963">Cytoplasm</keyword>
<keyword id="KW-0238">DNA-binding</keyword>
<keyword id="KW-0804">Transcription</keyword>
<keyword id="KW-0805">Transcription regulation</keyword>
<name>Y573_CHLPN</name>
<sequence>MAGHSKWANTKHRKERADHKKGKIFSRIIKELISAVKLGGADPKSNARLRMVIQKAKENNIPNENIERNLKKATSAEQKNFEEVTYELYGHGGVGIIVEAMTDNKNRTASDMRIAINKRGGSLVEPGSVLYNFARKGACTVAKSSIDEEVIFSYAIEAGAEDLDTEDEENFLVICAPSELASVKEKLISQGATCSEDRLIYLPLRLVDCDEKDGEANLALIDWLEQIEDVDDVYHNMS</sequence>
<feature type="chain" id="PRO_0000175784" description="Probable transcriptional regulatory protein CPn_0573/CP_0176/CPj0573/CpB0595">
    <location>
        <begin position="1"/>
        <end position="238"/>
    </location>
</feature>
<feature type="region of interest" description="Disordered" evidence="2">
    <location>
        <begin position="1"/>
        <end position="20"/>
    </location>
</feature>
<feature type="compositionally biased region" description="Basic residues" evidence="2">
    <location>
        <begin position="9"/>
        <end position="20"/>
    </location>
</feature>
<evidence type="ECO:0000255" key="1">
    <source>
        <dbReference type="HAMAP-Rule" id="MF_00693"/>
    </source>
</evidence>
<evidence type="ECO:0000256" key="2">
    <source>
        <dbReference type="SAM" id="MobiDB-lite"/>
    </source>
</evidence>
<proteinExistence type="inferred from homology"/>
<reference key="1">
    <citation type="journal article" date="1999" name="Nat. Genet.">
        <title>Comparative genomes of Chlamydia pneumoniae and C. trachomatis.</title>
        <authorList>
            <person name="Kalman S."/>
            <person name="Mitchell W.P."/>
            <person name="Marathe R."/>
            <person name="Lammel C.J."/>
            <person name="Fan J."/>
            <person name="Hyman R.W."/>
            <person name="Olinger L."/>
            <person name="Grimwood J."/>
            <person name="Davis R.W."/>
            <person name="Stephens R.S."/>
        </authorList>
    </citation>
    <scope>NUCLEOTIDE SEQUENCE [LARGE SCALE GENOMIC DNA]</scope>
    <source>
        <strain>CWL029</strain>
    </source>
</reference>
<reference key="2">
    <citation type="journal article" date="2000" name="Nucleic Acids Res.">
        <title>Genome sequences of Chlamydia trachomatis MoPn and Chlamydia pneumoniae AR39.</title>
        <authorList>
            <person name="Read T.D."/>
            <person name="Brunham R.C."/>
            <person name="Shen C."/>
            <person name="Gill S.R."/>
            <person name="Heidelberg J.F."/>
            <person name="White O."/>
            <person name="Hickey E.K."/>
            <person name="Peterson J.D."/>
            <person name="Utterback T.R."/>
            <person name="Berry K.J."/>
            <person name="Bass S."/>
            <person name="Linher K.D."/>
            <person name="Weidman J.F."/>
            <person name="Khouri H.M."/>
            <person name="Craven B."/>
            <person name="Bowman C."/>
            <person name="Dodson R.J."/>
            <person name="Gwinn M.L."/>
            <person name="Nelson W.C."/>
            <person name="DeBoy R.T."/>
            <person name="Kolonay J.F."/>
            <person name="McClarty G."/>
            <person name="Salzberg S.L."/>
            <person name="Eisen J.A."/>
            <person name="Fraser C.M."/>
        </authorList>
    </citation>
    <scope>NUCLEOTIDE SEQUENCE [LARGE SCALE GENOMIC DNA]</scope>
    <source>
        <strain>AR39</strain>
    </source>
</reference>
<reference key="3">
    <citation type="journal article" date="2000" name="Nucleic Acids Res.">
        <title>Comparison of whole genome sequences of Chlamydia pneumoniae J138 from Japan and CWL029 from USA.</title>
        <authorList>
            <person name="Shirai M."/>
            <person name="Hirakawa H."/>
            <person name="Kimoto M."/>
            <person name="Tabuchi M."/>
            <person name="Kishi F."/>
            <person name="Ouchi K."/>
            <person name="Shiba T."/>
            <person name="Ishii K."/>
            <person name="Hattori M."/>
            <person name="Kuhara S."/>
            <person name="Nakazawa T."/>
        </authorList>
    </citation>
    <scope>NUCLEOTIDE SEQUENCE [LARGE SCALE GENOMIC DNA]</scope>
    <source>
        <strain>J138</strain>
    </source>
</reference>
<reference key="4">
    <citation type="submission" date="2002-05" db="EMBL/GenBank/DDBJ databases">
        <title>The genome sequence of Chlamydia pneumoniae TW183 and comparison with other Chlamydia strains based on whole genome sequence analysis.</title>
        <authorList>
            <person name="Geng M.M."/>
            <person name="Schuhmacher A."/>
            <person name="Muehldorfer I."/>
            <person name="Bensch K.W."/>
            <person name="Schaefer K.P."/>
            <person name="Schneider S."/>
            <person name="Pohl T."/>
            <person name="Essig A."/>
            <person name="Marre R."/>
            <person name="Melchers K."/>
        </authorList>
    </citation>
    <scope>NUCLEOTIDE SEQUENCE [LARGE SCALE GENOMIC DNA]</scope>
    <source>
        <strain>TW-183</strain>
    </source>
</reference>
<protein>
    <recommendedName>
        <fullName evidence="1">Probable transcriptional regulatory protein CPn_0573/CP_0176/CPj0573/CpB0595</fullName>
    </recommendedName>
</protein>